<comment type="function">
    <text evidence="1">Accelerates the degradation of transcripts by removing pyrophosphate from the 5'-end of triphosphorylated RNA, leading to a more labile monophosphorylated state that can stimulate subsequent ribonuclease cleavage.</text>
</comment>
<comment type="cofactor">
    <cofactor evidence="1">
        <name>a divalent metal cation</name>
        <dbReference type="ChEBI" id="CHEBI:60240"/>
    </cofactor>
</comment>
<comment type="similarity">
    <text evidence="1">Belongs to the Nudix hydrolase family. RppH subfamily.</text>
</comment>
<name>RPPH_PSEA6</name>
<sequence>MIDAEGFRANVGIVICNSLGQVFWARRYGQHSWQFPQGGIDEGETAEQTMYRELYEEVGLKPEHVKILAVTKNWLRYKLPKRLIRQGSAPVCIGQKQKWFLLQLTCKEQDVDLLQSGHPEFDDWRWVSFWYPVRNVVSFKREVYRRAMKEFAPTAMALSSKPAQGQRSKRRRKN</sequence>
<feature type="chain" id="PRO_1000021969" description="RNA pyrophosphohydrolase">
    <location>
        <begin position="1"/>
        <end position="174"/>
    </location>
</feature>
<feature type="domain" description="Nudix hydrolase" evidence="1">
    <location>
        <begin position="6"/>
        <end position="149"/>
    </location>
</feature>
<feature type="short sequence motif" description="Nudix box">
    <location>
        <begin position="38"/>
        <end position="59"/>
    </location>
</feature>
<gene>
    <name evidence="1" type="primary">rppH</name>
    <name evidence="1" type="synonym">nudH</name>
    <name type="ordered locus">Patl_3846</name>
</gene>
<proteinExistence type="inferred from homology"/>
<keyword id="KW-0378">Hydrolase</keyword>
<evidence type="ECO:0000255" key="1">
    <source>
        <dbReference type="HAMAP-Rule" id="MF_00298"/>
    </source>
</evidence>
<protein>
    <recommendedName>
        <fullName evidence="1">RNA pyrophosphohydrolase</fullName>
        <ecNumber evidence="1">3.6.1.-</ecNumber>
    </recommendedName>
    <alternativeName>
        <fullName evidence="1">(Di)nucleoside polyphosphate hydrolase</fullName>
    </alternativeName>
</protein>
<organism>
    <name type="scientific">Pseudoalteromonas atlantica (strain T6c / ATCC BAA-1087)</name>
    <dbReference type="NCBI Taxonomy" id="3042615"/>
    <lineage>
        <taxon>Bacteria</taxon>
        <taxon>Pseudomonadati</taxon>
        <taxon>Pseudomonadota</taxon>
        <taxon>Gammaproteobacteria</taxon>
        <taxon>Alteromonadales</taxon>
        <taxon>Alteromonadaceae</taxon>
        <taxon>Paraglaciecola</taxon>
    </lineage>
</organism>
<reference key="1">
    <citation type="submission" date="2006-06" db="EMBL/GenBank/DDBJ databases">
        <title>Complete sequence of Pseudoalteromonas atlantica T6c.</title>
        <authorList>
            <consortium name="US DOE Joint Genome Institute"/>
            <person name="Copeland A."/>
            <person name="Lucas S."/>
            <person name="Lapidus A."/>
            <person name="Barry K."/>
            <person name="Detter J.C."/>
            <person name="Glavina del Rio T."/>
            <person name="Hammon N."/>
            <person name="Israni S."/>
            <person name="Dalin E."/>
            <person name="Tice H."/>
            <person name="Pitluck S."/>
            <person name="Saunders E."/>
            <person name="Brettin T."/>
            <person name="Bruce D."/>
            <person name="Han C."/>
            <person name="Tapia R."/>
            <person name="Gilna P."/>
            <person name="Schmutz J."/>
            <person name="Larimer F."/>
            <person name="Land M."/>
            <person name="Hauser L."/>
            <person name="Kyrpides N."/>
            <person name="Kim E."/>
            <person name="Karls A.C."/>
            <person name="Bartlett D."/>
            <person name="Higgins B.P."/>
            <person name="Richardson P."/>
        </authorList>
    </citation>
    <scope>NUCLEOTIDE SEQUENCE [LARGE SCALE GENOMIC DNA]</scope>
    <source>
        <strain>T6c / ATCC BAA-1087</strain>
    </source>
</reference>
<dbReference type="EC" id="3.6.1.-" evidence="1"/>
<dbReference type="EMBL" id="CP000388">
    <property type="protein sequence ID" value="ABG42346.1"/>
    <property type="molecule type" value="Genomic_DNA"/>
</dbReference>
<dbReference type="RefSeq" id="WP_006994712.1">
    <property type="nucleotide sequence ID" value="NC_008228.1"/>
</dbReference>
<dbReference type="SMR" id="Q15P42"/>
<dbReference type="STRING" id="342610.Patl_3846"/>
<dbReference type="KEGG" id="pat:Patl_3846"/>
<dbReference type="eggNOG" id="COG0494">
    <property type="taxonomic scope" value="Bacteria"/>
</dbReference>
<dbReference type="HOGENOM" id="CLU_087195_3_2_6"/>
<dbReference type="OrthoDB" id="9816040at2"/>
<dbReference type="Proteomes" id="UP000001981">
    <property type="component" value="Chromosome"/>
</dbReference>
<dbReference type="GO" id="GO:0005737">
    <property type="term" value="C:cytoplasm"/>
    <property type="evidence" value="ECO:0007669"/>
    <property type="project" value="TreeGrafter"/>
</dbReference>
<dbReference type="GO" id="GO:0034353">
    <property type="term" value="F:mRNA 5'-diphosphatase activity"/>
    <property type="evidence" value="ECO:0007669"/>
    <property type="project" value="TreeGrafter"/>
</dbReference>
<dbReference type="GO" id="GO:0006402">
    <property type="term" value="P:mRNA catabolic process"/>
    <property type="evidence" value="ECO:0007669"/>
    <property type="project" value="TreeGrafter"/>
</dbReference>
<dbReference type="CDD" id="cd03671">
    <property type="entry name" value="NUDIX_Ap4A_hydrolase_plant_like"/>
    <property type="match status" value="1"/>
</dbReference>
<dbReference type="FunFam" id="3.90.79.10:FF:000001">
    <property type="entry name" value="RNA pyrophosphohydrolase"/>
    <property type="match status" value="1"/>
</dbReference>
<dbReference type="Gene3D" id="3.90.79.10">
    <property type="entry name" value="Nucleoside Triphosphate Pyrophosphohydrolase"/>
    <property type="match status" value="1"/>
</dbReference>
<dbReference type="HAMAP" id="MF_00298">
    <property type="entry name" value="Nudix_RppH"/>
    <property type="match status" value="1"/>
</dbReference>
<dbReference type="InterPro" id="IPR020476">
    <property type="entry name" value="Nudix_hydrolase"/>
</dbReference>
<dbReference type="InterPro" id="IPR015797">
    <property type="entry name" value="NUDIX_hydrolase-like_dom_sf"/>
</dbReference>
<dbReference type="InterPro" id="IPR020084">
    <property type="entry name" value="NUDIX_hydrolase_CS"/>
</dbReference>
<dbReference type="InterPro" id="IPR000086">
    <property type="entry name" value="NUDIX_hydrolase_dom"/>
</dbReference>
<dbReference type="InterPro" id="IPR022927">
    <property type="entry name" value="RppH"/>
</dbReference>
<dbReference type="NCBIfam" id="NF001934">
    <property type="entry name" value="PRK00714.1-1"/>
    <property type="match status" value="1"/>
</dbReference>
<dbReference type="NCBIfam" id="NF001937">
    <property type="entry name" value="PRK00714.1-4"/>
    <property type="match status" value="1"/>
</dbReference>
<dbReference type="NCBIfam" id="NF001938">
    <property type="entry name" value="PRK00714.1-5"/>
    <property type="match status" value="1"/>
</dbReference>
<dbReference type="PANTHER" id="PTHR23114">
    <property type="entry name" value="M7GPPPN-MRNA HYDROLASE"/>
    <property type="match status" value="1"/>
</dbReference>
<dbReference type="PANTHER" id="PTHR23114:SF17">
    <property type="entry name" value="M7GPPPN-MRNA HYDROLASE"/>
    <property type="match status" value="1"/>
</dbReference>
<dbReference type="Pfam" id="PF00293">
    <property type="entry name" value="NUDIX"/>
    <property type="match status" value="1"/>
</dbReference>
<dbReference type="PRINTS" id="PR00502">
    <property type="entry name" value="NUDIXFAMILY"/>
</dbReference>
<dbReference type="SUPFAM" id="SSF55811">
    <property type="entry name" value="Nudix"/>
    <property type="match status" value="1"/>
</dbReference>
<dbReference type="PROSITE" id="PS51462">
    <property type="entry name" value="NUDIX"/>
    <property type="match status" value="1"/>
</dbReference>
<dbReference type="PROSITE" id="PS00893">
    <property type="entry name" value="NUDIX_BOX"/>
    <property type="match status" value="1"/>
</dbReference>
<accession>Q15P42</accession>